<keyword id="KW-1185">Reference proteome</keyword>
<keyword id="KW-0687">Ribonucleoprotein</keyword>
<keyword id="KW-0689">Ribosomal protein</keyword>
<keyword id="KW-0694">RNA-binding</keyword>
<keyword id="KW-0699">rRNA-binding</keyword>
<feature type="chain" id="PRO_1000142514" description="Large ribosomal subunit protein bL25">
    <location>
        <begin position="1"/>
        <end position="218"/>
    </location>
</feature>
<feature type="region of interest" description="Disordered" evidence="2">
    <location>
        <begin position="1"/>
        <end position="20"/>
    </location>
</feature>
<feature type="region of interest" description="Disordered" evidence="2">
    <location>
        <begin position="185"/>
        <end position="218"/>
    </location>
</feature>
<feature type="compositionally biased region" description="Acidic residues" evidence="2">
    <location>
        <begin position="192"/>
        <end position="218"/>
    </location>
</feature>
<protein>
    <recommendedName>
        <fullName evidence="1">Large ribosomal subunit protein bL25</fullName>
    </recommendedName>
    <alternativeName>
        <fullName evidence="3">50S ribosomal protein L25</fullName>
    </alternativeName>
    <alternativeName>
        <fullName evidence="1">General stress protein CTC</fullName>
    </alternativeName>
</protein>
<name>RL25_DESAL</name>
<accession>B8FLB8</accession>
<reference key="1">
    <citation type="journal article" date="2012" name="Environ. Microbiol.">
        <title>The genome sequence of Desulfatibacillum alkenivorans AK-01: a blueprint for anaerobic alkane oxidation.</title>
        <authorList>
            <person name="Callaghan A.V."/>
            <person name="Morris B.E."/>
            <person name="Pereira I.A."/>
            <person name="McInerney M.J."/>
            <person name="Austin R.N."/>
            <person name="Groves J.T."/>
            <person name="Kukor J.J."/>
            <person name="Suflita J.M."/>
            <person name="Young L.Y."/>
            <person name="Zylstra G.J."/>
            <person name="Wawrik B."/>
        </authorList>
    </citation>
    <scope>NUCLEOTIDE SEQUENCE [LARGE SCALE GENOMIC DNA]</scope>
    <source>
        <strain>AK-01</strain>
    </source>
</reference>
<organism>
    <name type="scientific">Desulfatibacillum aliphaticivorans</name>
    <dbReference type="NCBI Taxonomy" id="218208"/>
    <lineage>
        <taxon>Bacteria</taxon>
        <taxon>Pseudomonadati</taxon>
        <taxon>Thermodesulfobacteriota</taxon>
        <taxon>Desulfobacteria</taxon>
        <taxon>Desulfobacterales</taxon>
        <taxon>Desulfatibacillaceae</taxon>
        <taxon>Desulfatibacillum</taxon>
    </lineage>
</organism>
<gene>
    <name evidence="1" type="primary">rplY</name>
    <name evidence="1" type="synonym">ctc</name>
    <name type="ordered locus">Dalk_3375</name>
</gene>
<proteinExistence type="inferred from homology"/>
<sequence length="218" mass="23364">MKTHELKASPRTTRGNGPARALRREGFIPAVLYGPDSEPITLSVSHKDLSDILQGVGSSQVMFNLNIEGADAPRKAMIKELQTNVVSQRYLHADFYEISMDRKLHVMVPVVVEGKSKGMEEGGLLQVIRRELEVICLPGDIPEEFVIDVTELGIGEAVHLSDVPKGDAVEFPESADFTVVTVVAPTAAALPEEGEEGEEGEEGGEGGEAEGAEAASEE</sequence>
<evidence type="ECO:0000255" key="1">
    <source>
        <dbReference type="HAMAP-Rule" id="MF_01334"/>
    </source>
</evidence>
<evidence type="ECO:0000256" key="2">
    <source>
        <dbReference type="SAM" id="MobiDB-lite"/>
    </source>
</evidence>
<evidence type="ECO:0000305" key="3"/>
<comment type="function">
    <text evidence="1">This is one of the proteins that binds to the 5S RNA in the ribosome where it forms part of the central protuberance.</text>
</comment>
<comment type="subunit">
    <text evidence="1">Part of the 50S ribosomal subunit; part of the 5S rRNA/L5/L18/L25 subcomplex. Contacts the 5S rRNA. Binds to the 5S rRNA independently of L5 and L18.</text>
</comment>
<comment type="similarity">
    <text evidence="1">Belongs to the bacterial ribosomal protein bL25 family. CTC subfamily.</text>
</comment>
<dbReference type="EMBL" id="CP001322">
    <property type="protein sequence ID" value="ACL05064.1"/>
    <property type="molecule type" value="Genomic_DNA"/>
</dbReference>
<dbReference type="RefSeq" id="WP_015948121.1">
    <property type="nucleotide sequence ID" value="NC_011768.1"/>
</dbReference>
<dbReference type="SMR" id="B8FLB8"/>
<dbReference type="KEGG" id="dal:Dalk_3375"/>
<dbReference type="eggNOG" id="COG1825">
    <property type="taxonomic scope" value="Bacteria"/>
</dbReference>
<dbReference type="HOGENOM" id="CLU_075939_2_1_7"/>
<dbReference type="Proteomes" id="UP000000739">
    <property type="component" value="Chromosome"/>
</dbReference>
<dbReference type="GO" id="GO:0022625">
    <property type="term" value="C:cytosolic large ribosomal subunit"/>
    <property type="evidence" value="ECO:0007669"/>
    <property type="project" value="TreeGrafter"/>
</dbReference>
<dbReference type="GO" id="GO:0008097">
    <property type="term" value="F:5S rRNA binding"/>
    <property type="evidence" value="ECO:0007669"/>
    <property type="project" value="InterPro"/>
</dbReference>
<dbReference type="GO" id="GO:0003735">
    <property type="term" value="F:structural constituent of ribosome"/>
    <property type="evidence" value="ECO:0007669"/>
    <property type="project" value="InterPro"/>
</dbReference>
<dbReference type="GO" id="GO:0006412">
    <property type="term" value="P:translation"/>
    <property type="evidence" value="ECO:0007669"/>
    <property type="project" value="UniProtKB-UniRule"/>
</dbReference>
<dbReference type="CDD" id="cd00495">
    <property type="entry name" value="Ribosomal_L25_TL5_CTC"/>
    <property type="match status" value="1"/>
</dbReference>
<dbReference type="Gene3D" id="2.170.120.20">
    <property type="entry name" value="Ribosomal protein L25, beta domain"/>
    <property type="match status" value="1"/>
</dbReference>
<dbReference type="Gene3D" id="2.40.240.10">
    <property type="entry name" value="Ribosomal Protein L25, Chain P"/>
    <property type="match status" value="1"/>
</dbReference>
<dbReference type="HAMAP" id="MF_01334">
    <property type="entry name" value="Ribosomal_bL25_CTC"/>
    <property type="match status" value="1"/>
</dbReference>
<dbReference type="InterPro" id="IPR020056">
    <property type="entry name" value="Rbsml_bL25/Gln-tRNA_synth_N"/>
</dbReference>
<dbReference type="InterPro" id="IPR011035">
    <property type="entry name" value="Ribosomal_bL25/Gln-tRNA_synth"/>
</dbReference>
<dbReference type="InterPro" id="IPR020057">
    <property type="entry name" value="Ribosomal_bL25_b-dom"/>
</dbReference>
<dbReference type="InterPro" id="IPR037121">
    <property type="entry name" value="Ribosomal_bL25_C"/>
</dbReference>
<dbReference type="InterPro" id="IPR001021">
    <property type="entry name" value="Ribosomal_bL25_long"/>
</dbReference>
<dbReference type="InterPro" id="IPR029751">
    <property type="entry name" value="Ribosomal_L25_dom"/>
</dbReference>
<dbReference type="InterPro" id="IPR020930">
    <property type="entry name" value="Ribosomal_uL5_bac-type"/>
</dbReference>
<dbReference type="NCBIfam" id="TIGR00731">
    <property type="entry name" value="bL25_bact_ctc"/>
    <property type="match status" value="1"/>
</dbReference>
<dbReference type="PANTHER" id="PTHR33284">
    <property type="entry name" value="RIBOSOMAL PROTEIN L25/GLN-TRNA SYNTHETASE, ANTI-CODON-BINDING DOMAIN-CONTAINING PROTEIN"/>
    <property type="match status" value="1"/>
</dbReference>
<dbReference type="PANTHER" id="PTHR33284:SF1">
    <property type="entry name" value="RIBOSOMAL PROTEIN L25_GLN-TRNA SYNTHETASE, ANTI-CODON-BINDING DOMAIN-CONTAINING PROTEIN"/>
    <property type="match status" value="1"/>
</dbReference>
<dbReference type="Pfam" id="PF01386">
    <property type="entry name" value="Ribosomal_L25p"/>
    <property type="match status" value="1"/>
</dbReference>
<dbReference type="Pfam" id="PF14693">
    <property type="entry name" value="Ribosomal_TL5_C"/>
    <property type="match status" value="1"/>
</dbReference>
<dbReference type="SUPFAM" id="SSF50715">
    <property type="entry name" value="Ribosomal protein L25-like"/>
    <property type="match status" value="1"/>
</dbReference>